<proteinExistence type="inferred from homology"/>
<sequence length="398" mass="43117">MRGEFYQQLTNDLETARAEGLFKEERIITSAQQADITVADGSHVINFCANNYLGLANHPDLIAAAKAGMDSHGFGMASVRFICGTQDSHKELEQKLAAFLGMEDAILYSSCFDANGGLFETLLGAEDAIISDALNHASIIDGVRLCKAKRYRYANNDMQELEARLKEAREAGARHVLIATDGVFSMDGVIANLKGVCDLADKYDALVMVDDSHAVGFVGENGRGSHEYCDVMGRVDIITGTLGKALGGASGGYTAARKEVVEWLRQRSRPYLFSNSLAPAIVAASIKVLEMVEAGSELRDRLWANARQFREQMSAAGFTLAGADHAIIPVMLGDAVVAQKFARELQKEGIYVTGFFYPVVPKGQARIRTQMSAAHTPEQITRAVEAFTRIGKQLGVIA</sequence>
<organism>
    <name type="scientific">Escherichia coli O157:H7</name>
    <dbReference type="NCBI Taxonomy" id="83334"/>
    <lineage>
        <taxon>Bacteria</taxon>
        <taxon>Pseudomonadati</taxon>
        <taxon>Pseudomonadota</taxon>
        <taxon>Gammaproteobacteria</taxon>
        <taxon>Enterobacterales</taxon>
        <taxon>Enterobacteriaceae</taxon>
        <taxon>Escherichia</taxon>
    </lineage>
</organism>
<keyword id="KW-0012">Acyltransferase</keyword>
<keyword id="KW-0663">Pyridoxal phosphate</keyword>
<keyword id="KW-1185">Reference proteome</keyword>
<keyword id="KW-0808">Transferase</keyword>
<evidence type="ECO:0000255" key="1">
    <source>
        <dbReference type="HAMAP-Rule" id="MF_00985"/>
    </source>
</evidence>
<feature type="chain" id="PRO_0000163844" description="2-amino-3-ketobutyrate coenzyme A ligase">
    <location>
        <begin position="1"/>
        <end position="398"/>
    </location>
</feature>
<feature type="binding site" description="in other chain" evidence="1">
    <location>
        <begin position="111"/>
        <end position="112"/>
    </location>
    <ligand>
        <name>pyridoxal 5'-phosphate</name>
        <dbReference type="ChEBI" id="CHEBI:597326"/>
        <note>ligand shared between dimeric partners</note>
    </ligand>
</feature>
<feature type="binding site" evidence="1">
    <location>
        <position position="136"/>
    </location>
    <ligand>
        <name>substrate</name>
    </ligand>
</feature>
<feature type="binding site" description="in other chain" evidence="1">
    <location>
        <position position="185"/>
    </location>
    <ligand>
        <name>pyridoxal 5'-phosphate</name>
        <dbReference type="ChEBI" id="CHEBI:597326"/>
        <note>ligand shared between dimeric partners</note>
    </ligand>
</feature>
<feature type="binding site" description="in other chain" evidence="1">
    <location>
        <begin position="210"/>
        <end position="213"/>
    </location>
    <ligand>
        <name>pyridoxal 5'-phosphate</name>
        <dbReference type="ChEBI" id="CHEBI:597326"/>
        <note>ligand shared between dimeric partners</note>
    </ligand>
</feature>
<feature type="binding site" description="in other chain" evidence="1">
    <location>
        <begin position="241"/>
        <end position="244"/>
    </location>
    <ligand>
        <name>pyridoxal 5'-phosphate</name>
        <dbReference type="ChEBI" id="CHEBI:597326"/>
        <note>ligand shared between dimeric partners</note>
    </ligand>
</feature>
<feature type="binding site" evidence="1">
    <location>
        <begin position="274"/>
        <end position="275"/>
    </location>
    <ligand>
        <name>pyridoxal 5'-phosphate</name>
        <dbReference type="ChEBI" id="CHEBI:597326"/>
        <note>ligand shared between dimeric partners</note>
    </ligand>
</feature>
<feature type="binding site" evidence="1">
    <location>
        <position position="368"/>
    </location>
    <ligand>
        <name>substrate</name>
    </ligand>
</feature>
<feature type="modified residue" description="N6-(pyridoxal phosphate)lysine" evidence="1">
    <location>
        <position position="244"/>
    </location>
</feature>
<name>KBL_ECO57</name>
<gene>
    <name evidence="1" type="primary">kbl</name>
    <name type="ordered locus">Z5044</name>
    <name type="ordered locus">ECs4495</name>
</gene>
<dbReference type="EC" id="2.3.1.29" evidence="1"/>
<dbReference type="EMBL" id="AE005174">
    <property type="protein sequence ID" value="AAG58764.1"/>
    <property type="molecule type" value="Genomic_DNA"/>
</dbReference>
<dbReference type="EMBL" id="BA000007">
    <property type="protein sequence ID" value="BAB37918.1"/>
    <property type="molecule type" value="Genomic_DNA"/>
</dbReference>
<dbReference type="PIR" id="G91190">
    <property type="entry name" value="G91190"/>
</dbReference>
<dbReference type="PIR" id="H86037">
    <property type="entry name" value="H86037"/>
</dbReference>
<dbReference type="RefSeq" id="NP_312522.1">
    <property type="nucleotide sequence ID" value="NC_002695.1"/>
</dbReference>
<dbReference type="RefSeq" id="WP_001213834.1">
    <property type="nucleotide sequence ID" value="NZ_VOAI01000021.1"/>
</dbReference>
<dbReference type="SMR" id="P0AB78"/>
<dbReference type="STRING" id="155864.Z5044"/>
<dbReference type="GeneID" id="75202189"/>
<dbReference type="GeneID" id="915559"/>
<dbReference type="KEGG" id="ece:Z5044"/>
<dbReference type="KEGG" id="ecs:ECs_4495"/>
<dbReference type="PATRIC" id="fig|386585.9.peg.4711"/>
<dbReference type="eggNOG" id="COG0156">
    <property type="taxonomic scope" value="Bacteria"/>
</dbReference>
<dbReference type="HOGENOM" id="CLU_015846_11_0_6"/>
<dbReference type="OMA" id="GTHEYCD"/>
<dbReference type="UniPathway" id="UPA00046">
    <property type="reaction ID" value="UER00506"/>
</dbReference>
<dbReference type="Proteomes" id="UP000000558">
    <property type="component" value="Chromosome"/>
</dbReference>
<dbReference type="Proteomes" id="UP000002519">
    <property type="component" value="Chromosome"/>
</dbReference>
<dbReference type="GO" id="GO:0005829">
    <property type="term" value="C:cytosol"/>
    <property type="evidence" value="ECO:0007669"/>
    <property type="project" value="TreeGrafter"/>
</dbReference>
<dbReference type="GO" id="GO:0008890">
    <property type="term" value="F:glycine C-acetyltransferase activity"/>
    <property type="evidence" value="ECO:0007669"/>
    <property type="project" value="UniProtKB-UniRule"/>
</dbReference>
<dbReference type="GO" id="GO:0030170">
    <property type="term" value="F:pyridoxal phosphate binding"/>
    <property type="evidence" value="ECO:0007669"/>
    <property type="project" value="UniProtKB-UniRule"/>
</dbReference>
<dbReference type="GO" id="GO:0009058">
    <property type="term" value="P:biosynthetic process"/>
    <property type="evidence" value="ECO:0007669"/>
    <property type="project" value="InterPro"/>
</dbReference>
<dbReference type="GO" id="GO:0019518">
    <property type="term" value="P:L-threonine catabolic process to glycine"/>
    <property type="evidence" value="ECO:0007669"/>
    <property type="project" value="UniProtKB-UniRule"/>
</dbReference>
<dbReference type="CDD" id="cd06454">
    <property type="entry name" value="KBL_like"/>
    <property type="match status" value="1"/>
</dbReference>
<dbReference type="FunFam" id="3.90.1150.10:FF:000004">
    <property type="entry name" value="2-amino-3-ketobutyrate coenzyme A ligase"/>
    <property type="match status" value="1"/>
</dbReference>
<dbReference type="FunFam" id="3.40.640.10:FF:000006">
    <property type="entry name" value="5-aminolevulinate synthase, mitochondrial"/>
    <property type="match status" value="1"/>
</dbReference>
<dbReference type="Gene3D" id="3.90.1150.10">
    <property type="entry name" value="Aspartate Aminotransferase, domain 1"/>
    <property type="match status" value="1"/>
</dbReference>
<dbReference type="Gene3D" id="3.40.640.10">
    <property type="entry name" value="Type I PLP-dependent aspartate aminotransferase-like (Major domain)"/>
    <property type="match status" value="1"/>
</dbReference>
<dbReference type="HAMAP" id="MF_00985">
    <property type="entry name" value="2am3keto_CoA_ligase"/>
    <property type="match status" value="1"/>
</dbReference>
<dbReference type="InterPro" id="IPR011282">
    <property type="entry name" value="2am3keto_CoA_ligase"/>
</dbReference>
<dbReference type="InterPro" id="IPR001917">
    <property type="entry name" value="Aminotrans_II_pyridoxalP_BS"/>
</dbReference>
<dbReference type="InterPro" id="IPR004839">
    <property type="entry name" value="Aminotransferase_I/II_large"/>
</dbReference>
<dbReference type="InterPro" id="IPR050087">
    <property type="entry name" value="AON_synthase_class-II"/>
</dbReference>
<dbReference type="InterPro" id="IPR015424">
    <property type="entry name" value="PyrdxlP-dep_Trfase"/>
</dbReference>
<dbReference type="InterPro" id="IPR015421">
    <property type="entry name" value="PyrdxlP-dep_Trfase_major"/>
</dbReference>
<dbReference type="InterPro" id="IPR015422">
    <property type="entry name" value="PyrdxlP-dep_Trfase_small"/>
</dbReference>
<dbReference type="NCBIfam" id="TIGR01822">
    <property type="entry name" value="2am3keto_CoA"/>
    <property type="match status" value="1"/>
</dbReference>
<dbReference type="NCBIfam" id="NF005394">
    <property type="entry name" value="PRK06939.1"/>
    <property type="match status" value="1"/>
</dbReference>
<dbReference type="PANTHER" id="PTHR13693:SF102">
    <property type="entry name" value="2-AMINO-3-KETOBUTYRATE COENZYME A LIGASE, MITOCHONDRIAL"/>
    <property type="match status" value="1"/>
</dbReference>
<dbReference type="PANTHER" id="PTHR13693">
    <property type="entry name" value="CLASS II AMINOTRANSFERASE/8-AMINO-7-OXONONANOATE SYNTHASE"/>
    <property type="match status" value="1"/>
</dbReference>
<dbReference type="Pfam" id="PF00155">
    <property type="entry name" value="Aminotran_1_2"/>
    <property type="match status" value="1"/>
</dbReference>
<dbReference type="SUPFAM" id="SSF53383">
    <property type="entry name" value="PLP-dependent transferases"/>
    <property type="match status" value="1"/>
</dbReference>
<dbReference type="PROSITE" id="PS00599">
    <property type="entry name" value="AA_TRANSFER_CLASS_2"/>
    <property type="match status" value="1"/>
</dbReference>
<reference key="1">
    <citation type="journal article" date="2001" name="Nature">
        <title>Genome sequence of enterohaemorrhagic Escherichia coli O157:H7.</title>
        <authorList>
            <person name="Perna N.T."/>
            <person name="Plunkett G. III"/>
            <person name="Burland V."/>
            <person name="Mau B."/>
            <person name="Glasner J.D."/>
            <person name="Rose D.J."/>
            <person name="Mayhew G.F."/>
            <person name="Evans P.S."/>
            <person name="Gregor J."/>
            <person name="Kirkpatrick H.A."/>
            <person name="Posfai G."/>
            <person name="Hackett J."/>
            <person name="Klink S."/>
            <person name="Boutin A."/>
            <person name="Shao Y."/>
            <person name="Miller L."/>
            <person name="Grotbeck E.J."/>
            <person name="Davis N.W."/>
            <person name="Lim A."/>
            <person name="Dimalanta E.T."/>
            <person name="Potamousis K."/>
            <person name="Apodaca J."/>
            <person name="Anantharaman T.S."/>
            <person name="Lin J."/>
            <person name="Yen G."/>
            <person name="Schwartz D.C."/>
            <person name="Welch R.A."/>
            <person name="Blattner F.R."/>
        </authorList>
    </citation>
    <scope>NUCLEOTIDE SEQUENCE [LARGE SCALE GENOMIC DNA]</scope>
    <source>
        <strain>O157:H7 / EDL933 / ATCC 700927 / EHEC</strain>
    </source>
</reference>
<reference key="2">
    <citation type="journal article" date="2001" name="DNA Res.">
        <title>Complete genome sequence of enterohemorrhagic Escherichia coli O157:H7 and genomic comparison with a laboratory strain K-12.</title>
        <authorList>
            <person name="Hayashi T."/>
            <person name="Makino K."/>
            <person name="Ohnishi M."/>
            <person name="Kurokawa K."/>
            <person name="Ishii K."/>
            <person name="Yokoyama K."/>
            <person name="Han C.-G."/>
            <person name="Ohtsubo E."/>
            <person name="Nakayama K."/>
            <person name="Murata T."/>
            <person name="Tanaka M."/>
            <person name="Tobe T."/>
            <person name="Iida T."/>
            <person name="Takami H."/>
            <person name="Honda T."/>
            <person name="Sasakawa C."/>
            <person name="Ogasawara N."/>
            <person name="Yasunaga T."/>
            <person name="Kuhara S."/>
            <person name="Shiba T."/>
            <person name="Hattori M."/>
            <person name="Shinagawa H."/>
        </authorList>
    </citation>
    <scope>NUCLEOTIDE SEQUENCE [LARGE SCALE GENOMIC DNA]</scope>
    <source>
        <strain>O157:H7 / Sakai / RIMD 0509952 / EHEC</strain>
    </source>
</reference>
<comment type="function">
    <text evidence="1">Catalyzes the cleavage of 2-amino-3-ketobutyrate to glycine and acetyl-CoA.</text>
</comment>
<comment type="catalytic activity">
    <reaction evidence="1">
        <text>glycine + acetyl-CoA = (2S)-2-amino-3-oxobutanoate + CoA</text>
        <dbReference type="Rhea" id="RHEA:20736"/>
        <dbReference type="ChEBI" id="CHEBI:57287"/>
        <dbReference type="ChEBI" id="CHEBI:57288"/>
        <dbReference type="ChEBI" id="CHEBI:57305"/>
        <dbReference type="ChEBI" id="CHEBI:78948"/>
        <dbReference type="EC" id="2.3.1.29"/>
    </reaction>
</comment>
<comment type="cofactor">
    <cofactor evidence="1">
        <name>pyridoxal 5'-phosphate</name>
        <dbReference type="ChEBI" id="CHEBI:597326"/>
    </cofactor>
    <text evidence="1">Binds 1 pyridoxal phosphate per subunit.</text>
</comment>
<comment type="pathway">
    <text evidence="1">Amino-acid degradation; L-threonine degradation via oxydo-reductase pathway; glycine from L-threonine: step 2/2.</text>
</comment>
<comment type="subunit">
    <text evidence="1">Homodimer.</text>
</comment>
<comment type="similarity">
    <text evidence="1">Belongs to the class-II pyridoxal-phosphate-dependent aminotransferase family.</text>
</comment>
<accession>P0AB78</accession>
<accession>P07912</accession>
<protein>
    <recommendedName>
        <fullName evidence="1">2-amino-3-ketobutyrate coenzyme A ligase</fullName>
        <shortName evidence="1">AKB ligase</shortName>
        <shortName>KBL</shortName>
        <ecNumber evidence="1">2.3.1.29</ecNumber>
    </recommendedName>
    <alternativeName>
        <fullName evidence="1">Glycine acetyltransferase</fullName>
    </alternativeName>
</protein>